<organism>
    <name type="scientific">Escherichia coli (strain K12)</name>
    <dbReference type="NCBI Taxonomy" id="83333"/>
    <lineage>
        <taxon>Bacteria</taxon>
        <taxon>Pseudomonadati</taxon>
        <taxon>Pseudomonadota</taxon>
        <taxon>Gammaproteobacteria</taxon>
        <taxon>Enterobacterales</taxon>
        <taxon>Enterobacteriaceae</taxon>
        <taxon>Escherichia</taxon>
    </lineage>
</organism>
<gene>
    <name type="primary">yqjI</name>
    <name type="ordered locus">b3071</name>
    <name type="ordered locus">JW3042</name>
</gene>
<comment type="function">
    <text evidence="2">Represses the expression of YqjH which is involved in iron homeostasis under excess nickel conditions. Also represses its own expression.</text>
</comment>
<comment type="activity regulation">
    <text evidence="2">Divalent metals such as nickel and iron have a similar negative effect on YqjI DNA-binding activity.</text>
</comment>
<comment type="subunit">
    <text evidence="2">Oligomer (probable predominant form) and monomer.</text>
</comment>
<comment type="induction">
    <text evidence="2">Autorepressed.</text>
</comment>
<comment type="disruption phenotype">
    <text evidence="2">Disruption leads to a 40-fold increase in yqjH basal expression.</text>
</comment>
<evidence type="ECO:0000256" key="1">
    <source>
        <dbReference type="SAM" id="MobiDB-lite"/>
    </source>
</evidence>
<evidence type="ECO:0000269" key="2">
    <source>
    </source>
</evidence>
<name>YQJI_ECOLI</name>
<feature type="chain" id="PRO_0000169438" description="Transcriptional regulator YqjI">
    <location>
        <begin position="1"/>
        <end position="207"/>
    </location>
</feature>
<feature type="region of interest" description="Disordered" evidence="1">
    <location>
        <begin position="1"/>
        <end position="46"/>
    </location>
</feature>
<feature type="compositionally biased region" description="Basic and acidic residues" evidence="1">
    <location>
        <begin position="1"/>
        <end position="40"/>
    </location>
</feature>
<reference key="1">
    <citation type="journal article" date="1997" name="Science">
        <title>The complete genome sequence of Escherichia coli K-12.</title>
        <authorList>
            <person name="Blattner F.R."/>
            <person name="Plunkett G. III"/>
            <person name="Bloch C.A."/>
            <person name="Perna N.T."/>
            <person name="Burland V."/>
            <person name="Riley M."/>
            <person name="Collado-Vides J."/>
            <person name="Glasner J.D."/>
            <person name="Rode C.K."/>
            <person name="Mayhew G.F."/>
            <person name="Gregor J."/>
            <person name="Davis N.W."/>
            <person name="Kirkpatrick H.A."/>
            <person name="Goeden M.A."/>
            <person name="Rose D.J."/>
            <person name="Mau B."/>
            <person name="Shao Y."/>
        </authorList>
    </citation>
    <scope>NUCLEOTIDE SEQUENCE [LARGE SCALE GENOMIC DNA]</scope>
    <source>
        <strain>K12 / MG1655 / ATCC 47076</strain>
    </source>
</reference>
<reference key="2">
    <citation type="journal article" date="2006" name="Mol. Syst. Biol.">
        <title>Highly accurate genome sequences of Escherichia coli K-12 strains MG1655 and W3110.</title>
        <authorList>
            <person name="Hayashi K."/>
            <person name="Morooka N."/>
            <person name="Yamamoto Y."/>
            <person name="Fujita K."/>
            <person name="Isono K."/>
            <person name="Choi S."/>
            <person name="Ohtsubo E."/>
            <person name="Baba T."/>
            <person name="Wanner B.L."/>
            <person name="Mori H."/>
            <person name="Horiuchi T."/>
        </authorList>
    </citation>
    <scope>NUCLEOTIDE SEQUENCE [LARGE SCALE GENOMIC DNA]</scope>
    <source>
        <strain>K12 / W3110 / ATCC 27325 / DSM 5911</strain>
    </source>
</reference>
<reference key="3">
    <citation type="journal article" date="2011" name="J. Bacteriol.">
        <title>Fur and the novel regulator YqjI control transcription of the ferric reductase gene yqjH in Escherichia coli.</title>
        <authorList>
            <person name="Wang S."/>
            <person name="Wu Y."/>
            <person name="Outten F.W."/>
        </authorList>
    </citation>
    <scope>FUNCTION AS A TRANSCRIPTIONAL REGULATOR</scope>
    <scope>DISRUPTION PHENOTYPE</scope>
    <scope>ACTIVITY REGULATION</scope>
    <scope>SUBUNIT</scope>
    <scope>INDUCTION</scope>
    <source>
        <strain>K12 / MG1655 / ATCC 47076</strain>
    </source>
</reference>
<dbReference type="EMBL" id="U28379">
    <property type="protein sequence ID" value="AAA89150.1"/>
    <property type="molecule type" value="Genomic_DNA"/>
</dbReference>
<dbReference type="EMBL" id="U00096">
    <property type="protein sequence ID" value="AAC76106.1"/>
    <property type="molecule type" value="Genomic_DNA"/>
</dbReference>
<dbReference type="EMBL" id="AP009048">
    <property type="protein sequence ID" value="BAE77121.1"/>
    <property type="molecule type" value="Genomic_DNA"/>
</dbReference>
<dbReference type="PIR" id="D65095">
    <property type="entry name" value="D65095"/>
</dbReference>
<dbReference type="RefSeq" id="NP_417542.1">
    <property type="nucleotide sequence ID" value="NC_000913.3"/>
</dbReference>
<dbReference type="RefSeq" id="WP_000018003.1">
    <property type="nucleotide sequence ID" value="NZ_STEB01000001.1"/>
</dbReference>
<dbReference type="SMR" id="P64588"/>
<dbReference type="BioGRID" id="4259594">
    <property type="interactions" value="64"/>
</dbReference>
<dbReference type="DIP" id="DIP-48127N"/>
<dbReference type="FunCoup" id="P64588">
    <property type="interactions" value="189"/>
</dbReference>
<dbReference type="IntAct" id="P64588">
    <property type="interactions" value="31"/>
</dbReference>
<dbReference type="STRING" id="511145.b3071"/>
<dbReference type="jPOST" id="P64588"/>
<dbReference type="PaxDb" id="511145-b3071"/>
<dbReference type="EnsemblBacteria" id="AAC76106">
    <property type="protein sequence ID" value="AAC76106"/>
    <property type="gene ID" value="b3071"/>
</dbReference>
<dbReference type="GeneID" id="947584"/>
<dbReference type="KEGG" id="ecj:JW3042"/>
<dbReference type="KEGG" id="eco:b3071"/>
<dbReference type="KEGG" id="ecoc:C3026_16775"/>
<dbReference type="PATRIC" id="fig|1411691.4.peg.3659"/>
<dbReference type="EchoBASE" id="EB2788"/>
<dbReference type="eggNOG" id="COG1695">
    <property type="taxonomic scope" value="Bacteria"/>
</dbReference>
<dbReference type="HOGENOM" id="CLU_063440_1_0_6"/>
<dbReference type="InParanoid" id="P64588"/>
<dbReference type="OMA" id="IADKPSH"/>
<dbReference type="OrthoDB" id="9814826at2"/>
<dbReference type="PhylomeDB" id="P64588"/>
<dbReference type="BioCyc" id="EcoCyc:G7594-MONOMER"/>
<dbReference type="PRO" id="PR:P64588"/>
<dbReference type="Proteomes" id="UP000000625">
    <property type="component" value="Chromosome"/>
</dbReference>
<dbReference type="GO" id="GO:0005829">
    <property type="term" value="C:cytosol"/>
    <property type="evidence" value="ECO:0000314"/>
    <property type="project" value="EcoCyc"/>
</dbReference>
<dbReference type="GO" id="GO:0003677">
    <property type="term" value="F:DNA binding"/>
    <property type="evidence" value="ECO:0000314"/>
    <property type="project" value="EcoCyc"/>
</dbReference>
<dbReference type="GO" id="GO:0003700">
    <property type="term" value="F:DNA-binding transcription factor activity"/>
    <property type="evidence" value="ECO:0000314"/>
    <property type="project" value="EcoCyc"/>
</dbReference>
<dbReference type="GO" id="GO:0006974">
    <property type="term" value="P:DNA damage response"/>
    <property type="evidence" value="ECO:0000270"/>
    <property type="project" value="EcoliWiki"/>
</dbReference>
<dbReference type="GO" id="GO:0045892">
    <property type="term" value="P:negative regulation of DNA-templated transcription"/>
    <property type="evidence" value="ECO:0000314"/>
    <property type="project" value="EcoCyc"/>
</dbReference>
<dbReference type="GO" id="GO:0045893">
    <property type="term" value="P:positive regulation of DNA-templated transcription"/>
    <property type="evidence" value="ECO:0000314"/>
    <property type="project" value="EcoCyc"/>
</dbReference>
<dbReference type="Gene3D" id="1.10.10.10">
    <property type="entry name" value="Winged helix-like DNA-binding domain superfamily/Winged helix DNA-binding domain"/>
    <property type="match status" value="1"/>
</dbReference>
<dbReference type="InterPro" id="IPR005149">
    <property type="entry name" value="Tscrpt_reg_PadR_N"/>
</dbReference>
<dbReference type="InterPro" id="IPR036388">
    <property type="entry name" value="WH-like_DNA-bd_sf"/>
</dbReference>
<dbReference type="InterPro" id="IPR036390">
    <property type="entry name" value="WH_DNA-bd_sf"/>
</dbReference>
<dbReference type="PANTHER" id="PTHR43252">
    <property type="entry name" value="TRANSCRIPTIONAL REGULATOR YQJI"/>
    <property type="match status" value="1"/>
</dbReference>
<dbReference type="PANTHER" id="PTHR43252:SF7">
    <property type="entry name" value="TRANSCRIPTIONAL REGULATOR YQJI"/>
    <property type="match status" value="1"/>
</dbReference>
<dbReference type="Pfam" id="PF03551">
    <property type="entry name" value="PadR"/>
    <property type="match status" value="1"/>
</dbReference>
<dbReference type="SUPFAM" id="SSF46785">
    <property type="entry name" value="Winged helix' DNA-binding domain"/>
    <property type="match status" value="1"/>
</dbReference>
<accession>P64588</accession>
<accession>Q2M9D5</accession>
<accession>Q46872</accession>
<sequence length="207" mass="23401">MSHHHEGCCKHEGQPRHEGCCKGEKSEHEHCGHGHQHEHGQCCGGRHGRGGGRRQRFFGHGELRLVILDILSRDDSHGYELIKAIENLTQGNYTPSPGVIYPTLDFLQEQSLITIREEEGGKKQIALTEQGAQWLEENREQVEMIEERIKARCVGAALRQNPQMKRALDNFKAVLDLRVNQSDISDAQIKKIIAVIDRAAFDITQLD</sequence>
<keyword id="KW-0238">DNA-binding</keyword>
<keyword id="KW-1185">Reference proteome</keyword>
<keyword id="KW-0678">Repressor</keyword>
<keyword id="KW-0804">Transcription</keyword>
<keyword id="KW-0805">Transcription regulation</keyword>
<protein>
    <recommendedName>
        <fullName>Transcriptional regulator YqjI</fullName>
    </recommendedName>
</protein>
<proteinExistence type="evidence at protein level"/>